<organism>
    <name type="scientific">Chaetomium thermophilum (strain DSM 1495 / CBS 144.50 / IMI 039719)</name>
    <name type="common">Thermochaetoides thermophila</name>
    <dbReference type="NCBI Taxonomy" id="759272"/>
    <lineage>
        <taxon>Eukaryota</taxon>
        <taxon>Fungi</taxon>
        <taxon>Dikarya</taxon>
        <taxon>Ascomycota</taxon>
        <taxon>Pezizomycotina</taxon>
        <taxon>Sordariomycetes</taxon>
        <taxon>Sordariomycetidae</taxon>
        <taxon>Sordariales</taxon>
        <taxon>Chaetomiaceae</taxon>
        <taxon>Thermochaetoides</taxon>
    </lineage>
</organism>
<accession>G0SDP9</accession>
<accession>G3EQ77</accession>
<sequence>MDPPSKKRSIFGGITSLFRSSTAPPEDRKGKSTNSNSVTANAPSLPPPQPESNGASSPFSPAKRASEAQLSVRKIIPKPQGPSSKLSQSVSASEIAHRPAPSTPAPAAATPVPKRRPGDNPHKLAASTSTPALQNLPNPPAPATSSKATSFSGAPSTPRPSIFRNSLYARPAPATTYTQRVSSHPLTQSFPPVTPGRPGRAANVDINNRILSNTASTELFPMKIPEPPRHLTGEMLAKEVPEDPNRAGSIYADEYLAHLCPPEFDDLQRRQFFCILDLRRLKYAADEVFLKKDWKINILNFAKEYEKSRSLIMLRYGLYEFKTVRASEAVKREWKLKHGIPDSDDESGAPAKTNGGGKRKAEEDLEPSSSTFTHTASPNKRARATEAPATNKRKANDELEEESQPSKLQKPGSPSPAKTPSATKSVFESIANKTASPQTAPKSSLFSSSTAAKPNGSIFDNAQKTPATSSNIFGHLSDASKDEDNESDTGSEAEAEDETPAKKKKKTTVNGASSSAPSEGGESTQSRSIFDRITRDANGQPVRQLPEGGLFSGESRKRSLSPVKELPANNTWNASAGIKFATPGTSSIFGSSNPKPPATTDTIDFAASTTKKPEEAAAPAEAPKEATPTTNLFGAQTKATEEAPKPAATNIFGSTTNPTETSIPAGSLFSAKPATSTTNSLFGATTSAAGQKKDEESKPTEAAPAPAPATSTLFGAKPATTESPKTNLFQFGTPNKTETAPATQPQFGGLFGKPPSTETPTEKPATTSLFGTDASKPATTSSLFGSATTAADKPAATNLFGSTTTPADKPTTTNLFGSTSTQATSGSDEPTAKKFAFGGTTESKPTTSLFGSTTPAPATSTENKGGLFGATTTSATPATNTKPLFGSTPAPAQENKPLFGSSTTTAAPVFQFGSTPASTSTEQKPLFGATAATDSKPLFGSTSATSTEQKPLFGSSTTMTEQKPLFGSISTTATEQKPLFGSTSTTEAKPLFGAAPASTEQKSLFGITPSTTENNPASIFGNSSTSTEQKPLFGSAPASTEQKPLFGSTPSTTENKPAGLFGNTSTTSTSTPLFNFGSQNTTASQPSTTGSIFGSASASFTFTAGGSDGTIKNPFASDGSYSAPTSFNFGSGDSQSSSAPFTFGAGGGTPSFTFGASSDSSNASNNASSAPIFSFGASQPSSTPLFGQNNPPAASNIFASSLAPVGGTSTGTSKHVPSFLESENKASAYSSLDSPFTFGGASSLATTPAASTPEPSAANAAAAGEDQGASADADEQPQEQISLTDGGPGEEDESVVHEVRAKAVKLVTAADSSADSSNGSGEKPAEKKSNSPWKVMGVGPLRLLKHKQTGAVRMLLRAEPRGNIALNKLVLPQFTYKPDAATPKFIKFAAARDDGKGLETWMIQVKTPQLAQELAAALEEHKKANEKKDGEKNEESEKKDEKQEEKKNEEKKDEKEEKKDEKK</sequence>
<feature type="chain" id="PRO_0000433182" description="Nucleoporin NUP152">
    <location>
        <begin position="1"/>
        <end position="1463"/>
    </location>
</feature>
<feature type="repeat" description="FXFG 1">
    <location>
        <begin position="729"/>
        <end position="732"/>
    </location>
</feature>
<feature type="repeat" description="FXFG 2">
    <location>
        <begin position="835"/>
        <end position="838"/>
    </location>
</feature>
<feature type="repeat" description="FXFG 3">
    <location>
        <begin position="910"/>
        <end position="913"/>
    </location>
</feature>
<feature type="repeat" description="FXFG 4">
    <location>
        <begin position="1074"/>
        <end position="1077"/>
    </location>
</feature>
<feature type="repeat" description="FXFG 5">
    <location>
        <begin position="1127"/>
        <end position="1130"/>
    </location>
</feature>
<feature type="repeat" description="FXFG 6">
    <location>
        <begin position="1141"/>
        <end position="1144"/>
    </location>
</feature>
<feature type="repeat" description="FXFG 7">
    <location>
        <begin position="1152"/>
        <end position="1155"/>
    </location>
</feature>
<feature type="repeat" description="FXFG 8">
    <location>
        <begin position="1173"/>
        <end position="1176"/>
    </location>
</feature>
<feature type="repeat" description="FXFG 9">
    <location>
        <begin position="1236"/>
        <end position="1239"/>
    </location>
</feature>
<feature type="domain" description="RanBD1" evidence="3">
    <location>
        <begin position="1289"/>
        <end position="1427"/>
    </location>
</feature>
<feature type="region of interest" description="Disordered" evidence="4">
    <location>
        <begin position="1"/>
        <end position="199"/>
    </location>
</feature>
<feature type="region of interest" description="Disordered" evidence="4">
    <location>
        <begin position="339"/>
        <end position="568"/>
    </location>
</feature>
<feature type="region of interest" description="Disordered" evidence="4">
    <location>
        <begin position="609"/>
        <end position="1064"/>
    </location>
</feature>
<feature type="region of interest" description="Disordered" evidence="4">
    <location>
        <begin position="1155"/>
        <end position="1174"/>
    </location>
</feature>
<feature type="region of interest" description="Disordered" evidence="4">
    <location>
        <begin position="1179"/>
        <end position="1217"/>
    </location>
</feature>
<feature type="region of interest" description="Disordered" evidence="4">
    <location>
        <begin position="1240"/>
        <end position="1335"/>
    </location>
</feature>
<feature type="region of interest" description="Disordered" evidence="4">
    <location>
        <begin position="1416"/>
        <end position="1463"/>
    </location>
</feature>
<feature type="compositionally biased region" description="Polar residues" evidence="4">
    <location>
        <begin position="32"/>
        <end position="42"/>
    </location>
</feature>
<feature type="compositionally biased region" description="Polar residues" evidence="4">
    <location>
        <begin position="81"/>
        <end position="92"/>
    </location>
</feature>
<feature type="compositionally biased region" description="Polar residues" evidence="4">
    <location>
        <begin position="144"/>
        <end position="155"/>
    </location>
</feature>
<feature type="compositionally biased region" description="Polar residues" evidence="4">
    <location>
        <begin position="175"/>
        <end position="191"/>
    </location>
</feature>
<feature type="compositionally biased region" description="Polar residues" evidence="4">
    <location>
        <begin position="367"/>
        <end position="378"/>
    </location>
</feature>
<feature type="compositionally biased region" description="Polar residues" evidence="4">
    <location>
        <begin position="416"/>
        <end position="472"/>
    </location>
</feature>
<feature type="compositionally biased region" description="Acidic residues" evidence="4">
    <location>
        <begin position="481"/>
        <end position="498"/>
    </location>
</feature>
<feature type="compositionally biased region" description="Low complexity" evidence="4">
    <location>
        <begin position="511"/>
        <end position="523"/>
    </location>
</feature>
<feature type="compositionally biased region" description="Low complexity" evidence="4">
    <location>
        <begin position="616"/>
        <end position="630"/>
    </location>
</feature>
<feature type="compositionally biased region" description="Polar residues" evidence="4">
    <location>
        <begin position="651"/>
        <end position="664"/>
    </location>
</feature>
<feature type="compositionally biased region" description="Polar residues" evidence="4">
    <location>
        <begin position="673"/>
        <end position="689"/>
    </location>
</feature>
<feature type="compositionally biased region" description="Polar residues" evidence="4">
    <location>
        <begin position="720"/>
        <end position="746"/>
    </location>
</feature>
<feature type="compositionally biased region" description="Low complexity" evidence="4">
    <location>
        <begin position="753"/>
        <end position="768"/>
    </location>
</feature>
<feature type="compositionally biased region" description="Polar residues" evidence="4">
    <location>
        <begin position="777"/>
        <end position="789"/>
    </location>
</feature>
<feature type="compositionally biased region" description="Low complexity" evidence="4">
    <location>
        <begin position="803"/>
        <end position="813"/>
    </location>
</feature>
<feature type="compositionally biased region" description="Polar residues" evidence="4">
    <location>
        <begin position="814"/>
        <end position="828"/>
    </location>
</feature>
<feature type="compositionally biased region" description="Polar residues" evidence="4">
    <location>
        <begin position="840"/>
        <end position="863"/>
    </location>
</feature>
<feature type="compositionally biased region" description="Low complexity" evidence="4">
    <location>
        <begin position="870"/>
        <end position="881"/>
    </location>
</feature>
<feature type="compositionally biased region" description="Polar residues" evidence="4">
    <location>
        <begin position="900"/>
        <end position="923"/>
    </location>
</feature>
<feature type="compositionally biased region" description="Polar residues" evidence="4">
    <location>
        <begin position="940"/>
        <end position="961"/>
    </location>
</feature>
<feature type="compositionally biased region" description="Polar residues" evidence="4">
    <location>
        <begin position="968"/>
        <end position="987"/>
    </location>
</feature>
<feature type="compositionally biased region" description="Polar residues" evidence="4">
    <location>
        <begin position="998"/>
        <end position="1029"/>
    </location>
</feature>
<feature type="compositionally biased region" description="Polar residues" evidence="4">
    <location>
        <begin position="1037"/>
        <end position="1055"/>
    </location>
</feature>
<feature type="compositionally biased region" description="Low complexity" evidence="4">
    <location>
        <begin position="1156"/>
        <end position="1170"/>
    </location>
</feature>
<feature type="compositionally biased region" description="Polar residues" evidence="4">
    <location>
        <begin position="1179"/>
        <end position="1199"/>
    </location>
</feature>
<feature type="compositionally biased region" description="Low complexity" evidence="4">
    <location>
        <begin position="1240"/>
        <end position="1271"/>
    </location>
</feature>
<feature type="compositionally biased region" description="Basic and acidic residues" evidence="4">
    <location>
        <begin position="1418"/>
        <end position="1463"/>
    </location>
</feature>
<gene>
    <name type="primary">NUP152</name>
    <name type="ORF">CTHT_0052560</name>
</gene>
<name>NU152_CHATD</name>
<proteinExistence type="inferred from homology"/>
<protein>
    <recommendedName>
        <fullName evidence="5">Nucleoporin NUP152</fullName>
    </recommendedName>
    <alternativeName>
        <fullName>Nuclear pore protein NUP152</fullName>
    </alternativeName>
</protein>
<keyword id="KW-0472">Membrane</keyword>
<keyword id="KW-0509">mRNA transport</keyword>
<keyword id="KW-0906">Nuclear pore complex</keyword>
<keyword id="KW-0539">Nucleus</keyword>
<keyword id="KW-0653">Protein transport</keyword>
<keyword id="KW-1185">Reference proteome</keyword>
<keyword id="KW-0677">Repeat</keyword>
<keyword id="KW-0811">Translocation</keyword>
<keyword id="KW-0813">Transport</keyword>
<reference key="1">
    <citation type="journal article" date="2011" name="Cell">
        <title>Insight into structure and assembly of the nuclear pore complex by utilizing the genome of a eukaryotic thermophile.</title>
        <authorList>
            <person name="Amlacher S."/>
            <person name="Sarges P."/>
            <person name="Flemming D."/>
            <person name="van Noort V."/>
            <person name="Kunze R."/>
            <person name="Devos D.P."/>
            <person name="Arumugam M."/>
            <person name="Bork P."/>
            <person name="Hurt E."/>
        </authorList>
    </citation>
    <scope>NUCLEOTIDE SEQUENCE [LARGE SCALE GENOMIC DNA]</scope>
    <source>
        <strain>DSM 1495 / CBS 144.50 / IMI 039719</strain>
    </source>
</reference>
<evidence type="ECO:0000250" key="1">
    <source>
        <dbReference type="UniProtKB" id="P32499"/>
    </source>
</evidence>
<evidence type="ECO:0000250" key="2">
    <source>
        <dbReference type="UniProtKB" id="Q9USL4"/>
    </source>
</evidence>
<evidence type="ECO:0000255" key="3">
    <source>
        <dbReference type="PROSITE-ProRule" id="PRU00164"/>
    </source>
</evidence>
<evidence type="ECO:0000256" key="4">
    <source>
        <dbReference type="SAM" id="MobiDB-lite"/>
    </source>
</evidence>
<evidence type="ECO:0000303" key="5">
    <source>
    </source>
</evidence>
<evidence type="ECO:0000305" key="6">
    <source>
    </source>
</evidence>
<comment type="function">
    <text evidence="1">Functions as a component of the nuclear pore complex (NPC). NPC components, collectively referred to as nucleoporins (NUPs), can play the role of both NPC structural components and of docking or interaction partners for transiently associated nuclear transport factors. Active directional transport is assured by both, a Phe-Gly (FG) repeat affinity gradient for these transport factors across the NPC and a transport cofactor concentration gradient across the nuclear envelope (GSP1 and GSP2 GTPases associated predominantly with GTP in the nucleus, with GDP in the cytoplasm).</text>
</comment>
<comment type="subunit">
    <text evidence="2 6">The nuclear pore complex (NPC) constitutes the exclusive means of nucleocytoplasmic transport. NPCs allow the passive diffusion of ions and small molecules and the active, nuclear transport receptor-mediated bidirectional transport of macromolecules such as proteins, RNAs, ribonucleoparticles (RNPs), and ribosomal subunits across the nuclear envelope. The 55-60 MDa NPC is composed of at least 28 different subunits: AMO1, ELYS, GLE1, GLE2, MLP1, NDC1, NIC96, NSP1, NUP133, NUP145, NUP152, NUP159, NUP170, NUP188, NUP192, NUP37, NUP49, NUP53, NUP56, NUP57, NUP82, NUP84, NUP85, POM152, POM33, POM34, SEC13 and SEH1. Due to its 8-fold rotational symmetry, all subunits are present with 8 copies or multiples thereof.</text>
</comment>
<comment type="subcellular location">
    <subcellularLocation>
        <location evidence="1">Nucleus</location>
        <location evidence="1">Nuclear pore complex</location>
    </subcellularLocation>
    <subcellularLocation>
        <location evidence="1">Nucleus membrane</location>
        <topology evidence="1">Peripheral membrane protein</topology>
        <orientation evidence="1">Nucleoplasmic side</orientation>
    </subcellularLocation>
</comment>
<comment type="domain">
    <text evidence="1">Contains FG repeats. FG repeats are interaction sites for karyopherins (importins, exportins) and form probably an affinity gradient, guiding the transport proteins unidirectionally with their cargo through the NPC. FG repeat regions are highly flexible and lack ordered secondary structure. The overall conservation of FG repeats regarding exact sequence, spacing, and repeat unit length is limited. FG repeat types and their physico-chemical environment change across the NPC from the nucleoplasmic to the cytoplasmic side: FXFG repeats are especially abundant in NUPs on the nucleoplasmic side (in a highly charged environment and enriched in Ser and Thr).</text>
</comment>
<dbReference type="EMBL" id="GL988045">
    <property type="protein sequence ID" value="EGS18650.1"/>
    <property type="molecule type" value="Genomic_DNA"/>
</dbReference>
<dbReference type="EMBL" id="JF276304">
    <property type="protein sequence ID" value="AEN86180.1"/>
    <property type="molecule type" value="Genomic_DNA"/>
</dbReference>
<dbReference type="RefSeq" id="XP_006695595.1">
    <property type="nucleotide sequence ID" value="XM_006695532.1"/>
</dbReference>
<dbReference type="SMR" id="G0SDP9"/>
<dbReference type="STRING" id="759272.G0SDP9"/>
<dbReference type="TCDB" id="1.I.1.1.2">
    <property type="family name" value="the nuclear pore complex (npc) family"/>
</dbReference>
<dbReference type="GeneID" id="18259294"/>
<dbReference type="KEGG" id="cthr:CTHT_0052560"/>
<dbReference type="eggNOG" id="KOG0845">
    <property type="taxonomic scope" value="Eukaryota"/>
</dbReference>
<dbReference type="eggNOG" id="KOG0866">
    <property type="taxonomic scope" value="Eukaryota"/>
</dbReference>
<dbReference type="HOGENOM" id="CLU_002780_0_0_1"/>
<dbReference type="OMA" id="AFGNMFS"/>
<dbReference type="OrthoDB" id="185618at2759"/>
<dbReference type="Proteomes" id="UP000008066">
    <property type="component" value="Unassembled WGS sequence"/>
</dbReference>
<dbReference type="GO" id="GO:0031965">
    <property type="term" value="C:nuclear membrane"/>
    <property type="evidence" value="ECO:0007669"/>
    <property type="project" value="UniProtKB-SubCell"/>
</dbReference>
<dbReference type="GO" id="GO:0005643">
    <property type="term" value="C:nuclear pore"/>
    <property type="evidence" value="ECO:0007669"/>
    <property type="project" value="UniProtKB-SubCell"/>
</dbReference>
<dbReference type="GO" id="GO:0046907">
    <property type="term" value="P:intracellular transport"/>
    <property type="evidence" value="ECO:0007669"/>
    <property type="project" value="InterPro"/>
</dbReference>
<dbReference type="GO" id="GO:0051028">
    <property type="term" value="P:mRNA transport"/>
    <property type="evidence" value="ECO:0007669"/>
    <property type="project" value="UniProtKB-KW"/>
</dbReference>
<dbReference type="GO" id="GO:0015031">
    <property type="term" value="P:protein transport"/>
    <property type="evidence" value="ECO:0007669"/>
    <property type="project" value="UniProtKB-KW"/>
</dbReference>
<dbReference type="CDD" id="cd13170">
    <property type="entry name" value="RanBD_NUP50"/>
    <property type="match status" value="1"/>
</dbReference>
<dbReference type="Gene3D" id="2.30.29.30">
    <property type="entry name" value="Pleckstrin-homology domain (PH domain)/Phosphotyrosine-binding domain (PTB)"/>
    <property type="match status" value="1"/>
</dbReference>
<dbReference type="InterPro" id="IPR053074">
    <property type="entry name" value="NPC_Nucleoporin"/>
</dbReference>
<dbReference type="InterPro" id="IPR025574">
    <property type="entry name" value="Nucleoporin_FG_rpt"/>
</dbReference>
<dbReference type="InterPro" id="IPR011993">
    <property type="entry name" value="PH-like_dom_sf"/>
</dbReference>
<dbReference type="InterPro" id="IPR000156">
    <property type="entry name" value="Ran_bind_dom"/>
</dbReference>
<dbReference type="PANTHER" id="PTHR38697">
    <property type="entry name" value="NUCLEAR PORE COMPLEX PROTEIN SIMILAR TO S. CEREVISIAE NUP2 (EUROFUNG)"/>
    <property type="match status" value="1"/>
</dbReference>
<dbReference type="PANTHER" id="PTHR38697:SF1">
    <property type="entry name" value="NUCLEAR PORE COMPLEX PROTEIN SIMILAR TO S. CEREVISIAE NUP2 (EUROFUNG)"/>
    <property type="match status" value="1"/>
</dbReference>
<dbReference type="Pfam" id="PF13634">
    <property type="entry name" value="Nucleoporin_FG"/>
    <property type="match status" value="4"/>
</dbReference>
<dbReference type="Pfam" id="PF00638">
    <property type="entry name" value="Ran_BP1"/>
    <property type="match status" value="1"/>
</dbReference>
<dbReference type="SMART" id="SM00160">
    <property type="entry name" value="RanBD"/>
    <property type="match status" value="1"/>
</dbReference>
<dbReference type="SUPFAM" id="SSF50729">
    <property type="entry name" value="PH domain-like"/>
    <property type="match status" value="1"/>
</dbReference>
<dbReference type="PROSITE" id="PS50196">
    <property type="entry name" value="RANBD1"/>
    <property type="match status" value="1"/>
</dbReference>